<evidence type="ECO:0000255" key="1">
    <source>
        <dbReference type="HAMAP-Rule" id="MF_01877"/>
    </source>
</evidence>
<comment type="function">
    <text evidence="1">Catalyzes the 2'-O-methylation of the ribose of cytidine 1402 (C1402) in 16S rRNA.</text>
</comment>
<comment type="catalytic activity">
    <reaction evidence="1">
        <text>cytidine(1402) in 16S rRNA + S-adenosyl-L-methionine = 2'-O-methylcytidine(1402) in 16S rRNA + S-adenosyl-L-homocysteine + H(+)</text>
        <dbReference type="Rhea" id="RHEA:42924"/>
        <dbReference type="Rhea" id="RHEA-COMP:10285"/>
        <dbReference type="Rhea" id="RHEA-COMP:10286"/>
        <dbReference type="ChEBI" id="CHEBI:15378"/>
        <dbReference type="ChEBI" id="CHEBI:57856"/>
        <dbReference type="ChEBI" id="CHEBI:59789"/>
        <dbReference type="ChEBI" id="CHEBI:74495"/>
        <dbReference type="ChEBI" id="CHEBI:82748"/>
        <dbReference type="EC" id="2.1.1.198"/>
    </reaction>
</comment>
<comment type="subcellular location">
    <subcellularLocation>
        <location evidence="1">Cytoplasm</location>
    </subcellularLocation>
</comment>
<comment type="similarity">
    <text evidence="1">Belongs to the methyltransferase superfamily. RsmI family.</text>
</comment>
<gene>
    <name evidence="1" type="primary">rsmI</name>
    <name type="ordered locus">HP_0552</name>
</gene>
<feature type="chain" id="PRO_0000211941" description="Ribosomal RNA small subunit methyltransferase I">
    <location>
        <begin position="1"/>
        <end position="287"/>
    </location>
</feature>
<name>RSMI_HELPY</name>
<proteinExistence type="inferred from homology"/>
<keyword id="KW-0963">Cytoplasm</keyword>
<keyword id="KW-0489">Methyltransferase</keyword>
<keyword id="KW-1185">Reference proteome</keyword>
<keyword id="KW-0698">rRNA processing</keyword>
<keyword id="KW-0949">S-adenosyl-L-methionine</keyword>
<keyword id="KW-0808">Transferase</keyword>
<organism>
    <name type="scientific">Helicobacter pylori (strain ATCC 700392 / 26695)</name>
    <name type="common">Campylobacter pylori</name>
    <dbReference type="NCBI Taxonomy" id="85962"/>
    <lineage>
        <taxon>Bacteria</taxon>
        <taxon>Pseudomonadati</taxon>
        <taxon>Campylobacterota</taxon>
        <taxon>Epsilonproteobacteria</taxon>
        <taxon>Campylobacterales</taxon>
        <taxon>Helicobacteraceae</taxon>
        <taxon>Helicobacter</taxon>
    </lineage>
</organism>
<reference key="1">
    <citation type="journal article" date="1997" name="Nature">
        <title>The complete genome sequence of the gastric pathogen Helicobacter pylori.</title>
        <authorList>
            <person name="Tomb J.-F."/>
            <person name="White O."/>
            <person name="Kerlavage A.R."/>
            <person name="Clayton R.A."/>
            <person name="Sutton G.G."/>
            <person name="Fleischmann R.D."/>
            <person name="Ketchum K.A."/>
            <person name="Klenk H.-P."/>
            <person name="Gill S.R."/>
            <person name="Dougherty B.A."/>
            <person name="Nelson K.E."/>
            <person name="Quackenbush J."/>
            <person name="Zhou L."/>
            <person name="Kirkness E.F."/>
            <person name="Peterson S.N."/>
            <person name="Loftus B.J."/>
            <person name="Richardson D.L."/>
            <person name="Dodson R.J."/>
            <person name="Khalak H.G."/>
            <person name="Glodek A."/>
            <person name="McKenney K."/>
            <person name="FitzGerald L.M."/>
            <person name="Lee N."/>
            <person name="Adams M.D."/>
            <person name="Hickey E.K."/>
            <person name="Berg D.E."/>
            <person name="Gocayne J.D."/>
            <person name="Utterback T.R."/>
            <person name="Peterson J.D."/>
            <person name="Kelley J.M."/>
            <person name="Cotton M.D."/>
            <person name="Weidman J.F."/>
            <person name="Fujii C."/>
            <person name="Bowman C."/>
            <person name="Watthey L."/>
            <person name="Wallin E."/>
            <person name="Hayes W.S."/>
            <person name="Borodovsky M."/>
            <person name="Karp P.D."/>
            <person name="Smith H.O."/>
            <person name="Fraser C.M."/>
            <person name="Venter J.C."/>
        </authorList>
    </citation>
    <scope>NUCLEOTIDE SEQUENCE [LARGE SCALE GENOMIC DNA]</scope>
    <source>
        <strain>ATCC 700392 / 26695</strain>
    </source>
</reference>
<accession>P56204</accession>
<protein>
    <recommendedName>
        <fullName evidence="1">Ribosomal RNA small subunit methyltransferase I</fullName>
        <ecNumber evidence="1">2.1.1.198</ecNumber>
    </recommendedName>
    <alternativeName>
        <fullName evidence="1">16S rRNA 2'-O-ribose C1402 methyltransferase</fullName>
    </alternativeName>
    <alternativeName>
        <fullName evidence="1">rRNA (cytidine-2'-O-)-methyltransferase RsmI</fullName>
    </alternativeName>
</protein>
<dbReference type="EC" id="2.1.1.198" evidence="1"/>
<dbReference type="EMBL" id="AE000511">
    <property type="protein sequence ID" value="AAD07618.1"/>
    <property type="molecule type" value="Genomic_DNA"/>
</dbReference>
<dbReference type="PIR" id="H64588">
    <property type="entry name" value="H64588"/>
</dbReference>
<dbReference type="RefSeq" id="NP_207347.1">
    <property type="nucleotide sequence ID" value="NC_000915.1"/>
</dbReference>
<dbReference type="RefSeq" id="WP_000965287.1">
    <property type="nucleotide sequence ID" value="NC_018939.1"/>
</dbReference>
<dbReference type="SMR" id="P56204"/>
<dbReference type="DIP" id="DIP-3639N"/>
<dbReference type="FunCoup" id="P56204">
    <property type="interactions" value="232"/>
</dbReference>
<dbReference type="IntAct" id="P56204">
    <property type="interactions" value="3"/>
</dbReference>
<dbReference type="MINT" id="P56204"/>
<dbReference type="STRING" id="85962.HP_0552"/>
<dbReference type="PaxDb" id="85962-C694_02855"/>
<dbReference type="EnsemblBacteria" id="AAD07618">
    <property type="protein sequence ID" value="AAD07618"/>
    <property type="gene ID" value="HP_0552"/>
</dbReference>
<dbReference type="KEGG" id="heo:C694_02855"/>
<dbReference type="KEGG" id="hpy:HP_0552"/>
<dbReference type="PATRIC" id="fig|85962.47.peg.597"/>
<dbReference type="eggNOG" id="COG0313">
    <property type="taxonomic scope" value="Bacteria"/>
</dbReference>
<dbReference type="InParanoid" id="P56204"/>
<dbReference type="OrthoDB" id="9809084at2"/>
<dbReference type="PhylomeDB" id="P56204"/>
<dbReference type="Proteomes" id="UP000000429">
    <property type="component" value="Chromosome"/>
</dbReference>
<dbReference type="GO" id="GO:0005737">
    <property type="term" value="C:cytoplasm"/>
    <property type="evidence" value="ECO:0007669"/>
    <property type="project" value="UniProtKB-SubCell"/>
</dbReference>
<dbReference type="GO" id="GO:0070677">
    <property type="term" value="F:rRNA (cytosine-2'-O-)-methyltransferase activity"/>
    <property type="evidence" value="ECO:0007669"/>
    <property type="project" value="UniProtKB-UniRule"/>
</dbReference>
<dbReference type="CDD" id="cd11648">
    <property type="entry name" value="RsmI"/>
    <property type="match status" value="1"/>
</dbReference>
<dbReference type="FunFam" id="3.30.950.10:FF:000002">
    <property type="entry name" value="Ribosomal RNA small subunit methyltransferase I"/>
    <property type="match status" value="1"/>
</dbReference>
<dbReference type="FunFam" id="3.40.1010.10:FF:000007">
    <property type="entry name" value="Ribosomal RNA small subunit methyltransferase I"/>
    <property type="match status" value="1"/>
</dbReference>
<dbReference type="Gene3D" id="3.40.1010.10">
    <property type="entry name" value="Cobalt-precorrin-4 Transmethylase, Domain 1"/>
    <property type="match status" value="1"/>
</dbReference>
<dbReference type="Gene3D" id="3.30.950.10">
    <property type="entry name" value="Methyltransferase, Cobalt-precorrin-4 Transmethylase, Domain 2"/>
    <property type="match status" value="1"/>
</dbReference>
<dbReference type="HAMAP" id="MF_01877">
    <property type="entry name" value="16SrRNA_methyltr_I"/>
    <property type="match status" value="1"/>
</dbReference>
<dbReference type="InterPro" id="IPR000878">
    <property type="entry name" value="4pyrrol_Mease"/>
</dbReference>
<dbReference type="InterPro" id="IPR035996">
    <property type="entry name" value="4pyrrol_Methylase_sf"/>
</dbReference>
<dbReference type="InterPro" id="IPR014777">
    <property type="entry name" value="4pyrrole_Mease_sub1"/>
</dbReference>
<dbReference type="InterPro" id="IPR014776">
    <property type="entry name" value="4pyrrole_Mease_sub2"/>
</dbReference>
<dbReference type="InterPro" id="IPR008189">
    <property type="entry name" value="rRNA_ssu_MeTfrase_I"/>
</dbReference>
<dbReference type="InterPro" id="IPR018063">
    <property type="entry name" value="SAM_MeTrfase_RsmI_CS"/>
</dbReference>
<dbReference type="NCBIfam" id="TIGR00096">
    <property type="entry name" value="16S rRNA (cytidine(1402)-2'-O)-methyltransferase"/>
    <property type="match status" value="1"/>
</dbReference>
<dbReference type="PANTHER" id="PTHR46111">
    <property type="entry name" value="RIBOSOMAL RNA SMALL SUBUNIT METHYLTRANSFERASE I"/>
    <property type="match status" value="1"/>
</dbReference>
<dbReference type="PANTHER" id="PTHR46111:SF1">
    <property type="entry name" value="RIBOSOMAL RNA SMALL SUBUNIT METHYLTRANSFERASE I"/>
    <property type="match status" value="1"/>
</dbReference>
<dbReference type="Pfam" id="PF00590">
    <property type="entry name" value="TP_methylase"/>
    <property type="match status" value="1"/>
</dbReference>
<dbReference type="PIRSF" id="PIRSF005917">
    <property type="entry name" value="MTase_YraL"/>
    <property type="match status" value="1"/>
</dbReference>
<dbReference type="SUPFAM" id="SSF53790">
    <property type="entry name" value="Tetrapyrrole methylase"/>
    <property type="match status" value="1"/>
</dbReference>
<dbReference type="PROSITE" id="PS01296">
    <property type="entry name" value="RSMI"/>
    <property type="match status" value="1"/>
</dbReference>
<sequence>MLYFLPTPIGNLADITLRALEVLERCEVFLCEDTRVSKRLLHLLAQNPIISHSFPNIATKKREFIAFHSHNDQEFLNQIKPSFFDKEIAVMSDAGMPSLSDPGMSLAAYALKHNIQYDVLPGANALTTAFCASGFLEGRFFYAGFLPHKSKERRLKIAKILNALAYLEEKTPVVFYESPHRLLETLKDLNDLAKGMHLFAAKELTKLHQQYYLGEVSQIIERLQQSTIQGEWVLVLLNEKKIEPCMGLSALLELDLPPKIKAKIEAVMTQKNAKELYFQRLLEEKNQ</sequence>